<evidence type="ECO:0000255" key="1">
    <source>
        <dbReference type="HAMAP-Rule" id="MF_00123"/>
    </source>
</evidence>
<name>SYR_NEIMF</name>
<accession>A1KUU4</accession>
<protein>
    <recommendedName>
        <fullName evidence="1">Arginine--tRNA ligase</fullName>
        <ecNumber evidence="1">6.1.1.19</ecNumber>
    </recommendedName>
    <alternativeName>
        <fullName evidence="1">Arginyl-tRNA synthetase</fullName>
        <shortName evidence="1">ArgRS</shortName>
    </alternativeName>
</protein>
<gene>
    <name evidence="1" type="primary">argS</name>
    <name type="ordered locus">NMC1436</name>
</gene>
<dbReference type="EC" id="6.1.1.19" evidence="1"/>
<dbReference type="EMBL" id="AM421808">
    <property type="protein sequence ID" value="CAM10643.1"/>
    <property type="molecule type" value="Genomic_DNA"/>
</dbReference>
<dbReference type="RefSeq" id="WP_002245120.1">
    <property type="nucleotide sequence ID" value="NC_008767.1"/>
</dbReference>
<dbReference type="SMR" id="A1KUU4"/>
<dbReference type="KEGG" id="nmc:NMC1436"/>
<dbReference type="HOGENOM" id="CLU_006406_5_1_4"/>
<dbReference type="Proteomes" id="UP000002286">
    <property type="component" value="Chromosome"/>
</dbReference>
<dbReference type="GO" id="GO:0005737">
    <property type="term" value="C:cytoplasm"/>
    <property type="evidence" value="ECO:0007669"/>
    <property type="project" value="UniProtKB-SubCell"/>
</dbReference>
<dbReference type="GO" id="GO:0004814">
    <property type="term" value="F:arginine-tRNA ligase activity"/>
    <property type="evidence" value="ECO:0007669"/>
    <property type="project" value="UniProtKB-UniRule"/>
</dbReference>
<dbReference type="GO" id="GO:0005524">
    <property type="term" value="F:ATP binding"/>
    <property type="evidence" value="ECO:0007669"/>
    <property type="project" value="UniProtKB-UniRule"/>
</dbReference>
<dbReference type="GO" id="GO:0006420">
    <property type="term" value="P:arginyl-tRNA aminoacylation"/>
    <property type="evidence" value="ECO:0007669"/>
    <property type="project" value="UniProtKB-UniRule"/>
</dbReference>
<dbReference type="CDD" id="cd07956">
    <property type="entry name" value="Anticodon_Ia_Arg"/>
    <property type="match status" value="1"/>
</dbReference>
<dbReference type="CDD" id="cd00671">
    <property type="entry name" value="ArgRS_core"/>
    <property type="match status" value="1"/>
</dbReference>
<dbReference type="FunFam" id="3.40.50.620:FF:000030">
    <property type="entry name" value="Arginine--tRNA ligase"/>
    <property type="match status" value="1"/>
</dbReference>
<dbReference type="FunFam" id="1.10.730.10:FF:000006">
    <property type="entry name" value="Arginyl-tRNA synthetase 2, mitochondrial"/>
    <property type="match status" value="1"/>
</dbReference>
<dbReference type="Gene3D" id="3.30.1360.70">
    <property type="entry name" value="Arginyl tRNA synthetase N-terminal domain"/>
    <property type="match status" value="1"/>
</dbReference>
<dbReference type="Gene3D" id="3.40.50.620">
    <property type="entry name" value="HUPs"/>
    <property type="match status" value="1"/>
</dbReference>
<dbReference type="Gene3D" id="1.10.730.10">
    <property type="entry name" value="Isoleucyl-tRNA Synthetase, Domain 1"/>
    <property type="match status" value="1"/>
</dbReference>
<dbReference type="HAMAP" id="MF_00123">
    <property type="entry name" value="Arg_tRNA_synth"/>
    <property type="match status" value="1"/>
</dbReference>
<dbReference type="InterPro" id="IPR001412">
    <property type="entry name" value="aa-tRNA-synth_I_CS"/>
</dbReference>
<dbReference type="InterPro" id="IPR001278">
    <property type="entry name" value="Arg-tRNA-ligase"/>
</dbReference>
<dbReference type="InterPro" id="IPR005148">
    <property type="entry name" value="Arg-tRNA-synth_N"/>
</dbReference>
<dbReference type="InterPro" id="IPR036695">
    <property type="entry name" value="Arg-tRNA-synth_N_sf"/>
</dbReference>
<dbReference type="InterPro" id="IPR035684">
    <property type="entry name" value="ArgRS_core"/>
</dbReference>
<dbReference type="InterPro" id="IPR008909">
    <property type="entry name" value="DALR_anticod-bd"/>
</dbReference>
<dbReference type="InterPro" id="IPR014729">
    <property type="entry name" value="Rossmann-like_a/b/a_fold"/>
</dbReference>
<dbReference type="InterPro" id="IPR009080">
    <property type="entry name" value="tRNAsynth_Ia_anticodon-bd"/>
</dbReference>
<dbReference type="NCBIfam" id="TIGR00456">
    <property type="entry name" value="argS"/>
    <property type="match status" value="1"/>
</dbReference>
<dbReference type="PANTHER" id="PTHR11956:SF5">
    <property type="entry name" value="ARGININE--TRNA LIGASE, CYTOPLASMIC"/>
    <property type="match status" value="1"/>
</dbReference>
<dbReference type="PANTHER" id="PTHR11956">
    <property type="entry name" value="ARGINYL-TRNA SYNTHETASE"/>
    <property type="match status" value="1"/>
</dbReference>
<dbReference type="Pfam" id="PF03485">
    <property type="entry name" value="Arg_tRNA_synt_N"/>
    <property type="match status" value="1"/>
</dbReference>
<dbReference type="Pfam" id="PF05746">
    <property type="entry name" value="DALR_1"/>
    <property type="match status" value="1"/>
</dbReference>
<dbReference type="Pfam" id="PF00750">
    <property type="entry name" value="tRNA-synt_1d"/>
    <property type="match status" value="1"/>
</dbReference>
<dbReference type="PRINTS" id="PR01038">
    <property type="entry name" value="TRNASYNTHARG"/>
</dbReference>
<dbReference type="SMART" id="SM01016">
    <property type="entry name" value="Arg_tRNA_synt_N"/>
    <property type="match status" value="1"/>
</dbReference>
<dbReference type="SMART" id="SM00836">
    <property type="entry name" value="DALR_1"/>
    <property type="match status" value="1"/>
</dbReference>
<dbReference type="SUPFAM" id="SSF47323">
    <property type="entry name" value="Anticodon-binding domain of a subclass of class I aminoacyl-tRNA synthetases"/>
    <property type="match status" value="1"/>
</dbReference>
<dbReference type="SUPFAM" id="SSF55190">
    <property type="entry name" value="Arginyl-tRNA synthetase (ArgRS), N-terminal 'additional' domain"/>
    <property type="match status" value="1"/>
</dbReference>
<dbReference type="SUPFAM" id="SSF52374">
    <property type="entry name" value="Nucleotidylyl transferase"/>
    <property type="match status" value="1"/>
</dbReference>
<dbReference type="PROSITE" id="PS00178">
    <property type="entry name" value="AA_TRNA_LIGASE_I"/>
    <property type="match status" value="1"/>
</dbReference>
<keyword id="KW-0030">Aminoacyl-tRNA synthetase</keyword>
<keyword id="KW-0067">ATP-binding</keyword>
<keyword id="KW-0963">Cytoplasm</keyword>
<keyword id="KW-0436">Ligase</keyword>
<keyword id="KW-0547">Nucleotide-binding</keyword>
<keyword id="KW-0648">Protein biosynthesis</keyword>
<reference key="1">
    <citation type="journal article" date="2007" name="PLoS Genet.">
        <title>Meningococcal genetic variation mechanisms viewed through comparative analysis of serogroup C strain FAM18.</title>
        <authorList>
            <person name="Bentley S.D."/>
            <person name="Vernikos G.S."/>
            <person name="Snyder L.A.S."/>
            <person name="Churcher C."/>
            <person name="Arrowsmith C."/>
            <person name="Chillingworth T."/>
            <person name="Cronin A."/>
            <person name="Davis P.H."/>
            <person name="Holroyd N.E."/>
            <person name="Jagels K."/>
            <person name="Maddison M."/>
            <person name="Moule S."/>
            <person name="Rabbinowitsch E."/>
            <person name="Sharp S."/>
            <person name="Unwin L."/>
            <person name="Whitehead S."/>
            <person name="Quail M.A."/>
            <person name="Achtman M."/>
            <person name="Barrell B.G."/>
            <person name="Saunders N.J."/>
            <person name="Parkhill J."/>
        </authorList>
    </citation>
    <scope>NUCLEOTIDE SEQUENCE [LARGE SCALE GENOMIC DNA]</scope>
    <source>
        <strain>ATCC 700532 / DSM 15464 / FAM18</strain>
    </source>
</reference>
<feature type="chain" id="PRO_1000018075" description="Arginine--tRNA ligase">
    <location>
        <begin position="1"/>
        <end position="572"/>
    </location>
</feature>
<feature type="short sequence motif" description="'HIGH' region">
    <location>
        <begin position="122"/>
        <end position="132"/>
    </location>
</feature>
<sequence>MNLHQTVEHEAAAAFAAAGIADSPVVLQPTKNAEHGDFQINGVMGAAKKAKQNPRELAQKVADALAGNAVIESAEVAGPGFINLRLRPEFLAQNIQTALNDARFGVAKTDKPQTVVIDYSSPNLAKEMHVGHLRSSIIGDSISRVLEFMGNTVIRQNHVGDWGTQFGMLVAYLVEQQKDNAAFELADLEQFYRAAKVRFDEDPAFADTAREYVVKLQGGDETVLALWKQFVDISLSHAQAVYDTLGLKLRPEDVAGESKYNDDLQAVVDDLVQKGLAVEDDGAKVVFLDEFKNKEGEPAAFIVQKQGGGFLYASTDLACLRYRVGTLHADRLLYVVDHRQALHFEQLFTTSRKAGYLPENVGAAFVGFGTMMGKDGKPFKTRSGDTVKLVDLLTEAVERATALVKEKNPELGADEAAKIGKTVGIGAVKYADLSKNRTSDYVFDWDAMLSFEGNTAPYLQYAYTRVQSVFRKAGEWDADAPTVLTEPLEKQLAAELLKFENVLQSVADTAYPHYLAAYLYQIATLFSRFYEACPILKAEGASRNSRLQLAKLTGDTLKQGLDLLGIDVLDVM</sequence>
<comment type="catalytic activity">
    <reaction evidence="1">
        <text>tRNA(Arg) + L-arginine + ATP = L-arginyl-tRNA(Arg) + AMP + diphosphate</text>
        <dbReference type="Rhea" id="RHEA:20301"/>
        <dbReference type="Rhea" id="RHEA-COMP:9658"/>
        <dbReference type="Rhea" id="RHEA-COMP:9673"/>
        <dbReference type="ChEBI" id="CHEBI:30616"/>
        <dbReference type="ChEBI" id="CHEBI:32682"/>
        <dbReference type="ChEBI" id="CHEBI:33019"/>
        <dbReference type="ChEBI" id="CHEBI:78442"/>
        <dbReference type="ChEBI" id="CHEBI:78513"/>
        <dbReference type="ChEBI" id="CHEBI:456215"/>
        <dbReference type="EC" id="6.1.1.19"/>
    </reaction>
</comment>
<comment type="subunit">
    <text evidence="1">Monomer.</text>
</comment>
<comment type="subcellular location">
    <subcellularLocation>
        <location evidence="1">Cytoplasm</location>
    </subcellularLocation>
</comment>
<comment type="similarity">
    <text evidence="1">Belongs to the class-I aminoacyl-tRNA synthetase family.</text>
</comment>
<organism>
    <name type="scientific">Neisseria meningitidis serogroup C / serotype 2a (strain ATCC 700532 / DSM 15464 / FAM18)</name>
    <dbReference type="NCBI Taxonomy" id="272831"/>
    <lineage>
        <taxon>Bacteria</taxon>
        <taxon>Pseudomonadati</taxon>
        <taxon>Pseudomonadota</taxon>
        <taxon>Betaproteobacteria</taxon>
        <taxon>Neisseriales</taxon>
        <taxon>Neisseriaceae</taxon>
        <taxon>Neisseria</taxon>
    </lineage>
</organism>
<proteinExistence type="inferred from homology"/>